<organism>
    <name type="scientific">Leptospira interrogans serogroup Icterohaemorrhagiae serovar copenhageni (strain Fiocruz L1-130)</name>
    <dbReference type="NCBI Taxonomy" id="267671"/>
    <lineage>
        <taxon>Bacteria</taxon>
        <taxon>Pseudomonadati</taxon>
        <taxon>Spirochaetota</taxon>
        <taxon>Spirochaetia</taxon>
        <taxon>Leptospirales</taxon>
        <taxon>Leptospiraceae</taxon>
        <taxon>Leptospira</taxon>
    </lineage>
</organism>
<accession>Q72NI9</accession>
<protein>
    <recommendedName>
        <fullName evidence="1">Large ribosomal subunit protein bL17</fullName>
    </recommendedName>
    <alternativeName>
        <fullName evidence="3">50S ribosomal protein L17</fullName>
    </alternativeName>
</protein>
<keyword id="KW-0687">Ribonucleoprotein</keyword>
<keyword id="KW-0689">Ribosomal protein</keyword>
<dbReference type="EMBL" id="AE016823">
    <property type="protein sequence ID" value="AAS71398.1"/>
    <property type="molecule type" value="Genomic_DNA"/>
</dbReference>
<dbReference type="RefSeq" id="WP_001042619.1">
    <property type="nucleotide sequence ID" value="NC_005823.1"/>
</dbReference>
<dbReference type="SMR" id="Q72NI9"/>
<dbReference type="GeneID" id="61142719"/>
<dbReference type="KEGG" id="lic:LIC_12845"/>
<dbReference type="HOGENOM" id="CLU_074407_2_0_12"/>
<dbReference type="Proteomes" id="UP000007037">
    <property type="component" value="Chromosome I"/>
</dbReference>
<dbReference type="GO" id="GO:0022625">
    <property type="term" value="C:cytosolic large ribosomal subunit"/>
    <property type="evidence" value="ECO:0007669"/>
    <property type="project" value="TreeGrafter"/>
</dbReference>
<dbReference type="GO" id="GO:0003735">
    <property type="term" value="F:structural constituent of ribosome"/>
    <property type="evidence" value="ECO:0007669"/>
    <property type="project" value="InterPro"/>
</dbReference>
<dbReference type="GO" id="GO:0006412">
    <property type="term" value="P:translation"/>
    <property type="evidence" value="ECO:0007669"/>
    <property type="project" value="UniProtKB-UniRule"/>
</dbReference>
<dbReference type="FunFam" id="3.90.1030.10:FF:000008">
    <property type="entry name" value="50S ribosomal protein L17"/>
    <property type="match status" value="1"/>
</dbReference>
<dbReference type="Gene3D" id="3.90.1030.10">
    <property type="entry name" value="Ribosomal protein L17"/>
    <property type="match status" value="1"/>
</dbReference>
<dbReference type="HAMAP" id="MF_01368">
    <property type="entry name" value="Ribosomal_bL17"/>
    <property type="match status" value="1"/>
</dbReference>
<dbReference type="InterPro" id="IPR000456">
    <property type="entry name" value="Ribosomal_bL17"/>
</dbReference>
<dbReference type="InterPro" id="IPR047859">
    <property type="entry name" value="Ribosomal_bL17_CS"/>
</dbReference>
<dbReference type="InterPro" id="IPR036373">
    <property type="entry name" value="Ribosomal_bL17_sf"/>
</dbReference>
<dbReference type="NCBIfam" id="TIGR00059">
    <property type="entry name" value="L17"/>
    <property type="match status" value="1"/>
</dbReference>
<dbReference type="PANTHER" id="PTHR14413:SF16">
    <property type="entry name" value="LARGE RIBOSOMAL SUBUNIT PROTEIN BL17M"/>
    <property type="match status" value="1"/>
</dbReference>
<dbReference type="PANTHER" id="PTHR14413">
    <property type="entry name" value="RIBOSOMAL PROTEIN L17"/>
    <property type="match status" value="1"/>
</dbReference>
<dbReference type="Pfam" id="PF01196">
    <property type="entry name" value="Ribosomal_L17"/>
    <property type="match status" value="1"/>
</dbReference>
<dbReference type="SUPFAM" id="SSF64263">
    <property type="entry name" value="Prokaryotic ribosomal protein L17"/>
    <property type="match status" value="1"/>
</dbReference>
<dbReference type="PROSITE" id="PS01167">
    <property type="entry name" value="RIBOSOMAL_L17"/>
    <property type="match status" value="1"/>
</dbReference>
<comment type="subunit">
    <text evidence="1">Part of the 50S ribosomal subunit. Contacts protein L32.</text>
</comment>
<comment type="similarity">
    <text evidence="1">Belongs to the bacterial ribosomal protein bL17 family.</text>
</comment>
<evidence type="ECO:0000255" key="1">
    <source>
        <dbReference type="HAMAP-Rule" id="MF_01368"/>
    </source>
</evidence>
<evidence type="ECO:0000256" key="2">
    <source>
        <dbReference type="SAM" id="MobiDB-lite"/>
    </source>
</evidence>
<evidence type="ECO:0000305" key="3"/>
<reference key="1">
    <citation type="journal article" date="2004" name="J. Bacteriol.">
        <title>Comparative genomics of two Leptospira interrogans serovars reveals novel insights into physiology and pathogenesis.</title>
        <authorList>
            <person name="Nascimento A.L.T.O."/>
            <person name="Ko A.I."/>
            <person name="Martins E.A.L."/>
            <person name="Monteiro-Vitorello C.B."/>
            <person name="Ho P.L."/>
            <person name="Haake D.A."/>
            <person name="Verjovski-Almeida S."/>
            <person name="Hartskeerl R.A."/>
            <person name="Marques M.V."/>
            <person name="Oliveira M.C."/>
            <person name="Menck C.F.M."/>
            <person name="Leite L.C.C."/>
            <person name="Carrer H."/>
            <person name="Coutinho L.L."/>
            <person name="Degrave W.M."/>
            <person name="Dellagostin O.A."/>
            <person name="El-Dorry H."/>
            <person name="Ferro E.S."/>
            <person name="Ferro M.I.T."/>
            <person name="Furlan L.R."/>
            <person name="Gamberini M."/>
            <person name="Giglioti E.A."/>
            <person name="Goes-Neto A."/>
            <person name="Goldman G.H."/>
            <person name="Goldman M.H.S."/>
            <person name="Harakava R."/>
            <person name="Jeronimo S.M.B."/>
            <person name="Junqueira-de-Azevedo I.L.M."/>
            <person name="Kimura E.T."/>
            <person name="Kuramae E.E."/>
            <person name="Lemos E.G.M."/>
            <person name="Lemos M.V.F."/>
            <person name="Marino C.L."/>
            <person name="Nunes L.R."/>
            <person name="de Oliveira R.C."/>
            <person name="Pereira G.G."/>
            <person name="Reis M.S."/>
            <person name="Schriefer A."/>
            <person name="Siqueira W.J."/>
            <person name="Sommer P."/>
            <person name="Tsai S.M."/>
            <person name="Simpson A.J.G."/>
            <person name="Ferro J.A."/>
            <person name="Camargo L.E.A."/>
            <person name="Kitajima J.P."/>
            <person name="Setubal J.C."/>
            <person name="Van Sluys M.A."/>
        </authorList>
    </citation>
    <scope>NUCLEOTIDE SEQUENCE [LARGE SCALE GENOMIC DNA]</scope>
    <source>
        <strain>Fiocruz L1-130</strain>
    </source>
</reference>
<sequence>MNKRNKVKHLNRNKGHRDALINNMITSLFKYERIESTQAKLKVVRSHAEKLITRAKKNLVTDLKPEVQLHNKREVMKRIKDREVVVKLFEDIAKRFETKNGGYTRVLKLVNRISDNSEVGILELTSRKERSTLLKERIEKREIQTKAREEKRATRKSNSAPVSKETTSKKK</sequence>
<proteinExistence type="inferred from homology"/>
<feature type="chain" id="PRO_0000175530" description="Large ribosomal subunit protein bL17">
    <location>
        <begin position="1"/>
        <end position="171"/>
    </location>
</feature>
<feature type="region of interest" description="Disordered" evidence="2">
    <location>
        <begin position="140"/>
        <end position="171"/>
    </location>
</feature>
<feature type="compositionally biased region" description="Basic and acidic residues" evidence="2">
    <location>
        <begin position="140"/>
        <end position="152"/>
    </location>
</feature>
<feature type="compositionally biased region" description="Polar residues" evidence="2">
    <location>
        <begin position="156"/>
        <end position="165"/>
    </location>
</feature>
<gene>
    <name evidence="1" type="primary">rplQ</name>
    <name type="ordered locus">LIC_12845</name>
</gene>
<name>RL17_LEPIC</name>